<gene>
    <name evidence="1" type="primary">minE</name>
    <name type="ordered locus">Cagg_3785</name>
</gene>
<organism>
    <name type="scientific">Chloroflexus aggregans (strain MD-66 / DSM 9485)</name>
    <dbReference type="NCBI Taxonomy" id="326427"/>
    <lineage>
        <taxon>Bacteria</taxon>
        <taxon>Bacillati</taxon>
        <taxon>Chloroflexota</taxon>
        <taxon>Chloroflexia</taxon>
        <taxon>Chloroflexales</taxon>
        <taxon>Chloroflexineae</taxon>
        <taxon>Chloroflexaceae</taxon>
        <taxon>Chloroflexus</taxon>
    </lineage>
</organism>
<dbReference type="EMBL" id="CP001337">
    <property type="protein sequence ID" value="ACL26621.1"/>
    <property type="molecule type" value="Genomic_DNA"/>
</dbReference>
<dbReference type="RefSeq" id="WP_015942466.1">
    <property type="nucleotide sequence ID" value="NC_011831.1"/>
</dbReference>
<dbReference type="SMR" id="B8GB21"/>
<dbReference type="STRING" id="326427.Cagg_3785"/>
<dbReference type="KEGG" id="cag:Cagg_3785"/>
<dbReference type="eggNOG" id="COG0851">
    <property type="taxonomic scope" value="Bacteria"/>
</dbReference>
<dbReference type="HOGENOM" id="CLU_137929_1_1_0"/>
<dbReference type="OrthoDB" id="9796578at2"/>
<dbReference type="Proteomes" id="UP000002508">
    <property type="component" value="Chromosome"/>
</dbReference>
<dbReference type="GO" id="GO:0051301">
    <property type="term" value="P:cell division"/>
    <property type="evidence" value="ECO:0007669"/>
    <property type="project" value="UniProtKB-KW"/>
</dbReference>
<dbReference type="GO" id="GO:0032955">
    <property type="term" value="P:regulation of division septum assembly"/>
    <property type="evidence" value="ECO:0007669"/>
    <property type="project" value="InterPro"/>
</dbReference>
<dbReference type="Gene3D" id="3.30.1070.10">
    <property type="entry name" value="Cell division topological specificity factor MinE"/>
    <property type="match status" value="1"/>
</dbReference>
<dbReference type="HAMAP" id="MF_00262">
    <property type="entry name" value="MinE"/>
    <property type="match status" value="1"/>
</dbReference>
<dbReference type="InterPro" id="IPR005527">
    <property type="entry name" value="MinE"/>
</dbReference>
<dbReference type="InterPro" id="IPR036707">
    <property type="entry name" value="MinE_sf"/>
</dbReference>
<dbReference type="NCBIfam" id="TIGR01215">
    <property type="entry name" value="minE"/>
    <property type="match status" value="1"/>
</dbReference>
<dbReference type="Pfam" id="PF03776">
    <property type="entry name" value="MinE"/>
    <property type="match status" value="1"/>
</dbReference>
<dbReference type="SUPFAM" id="SSF55229">
    <property type="entry name" value="Cell division protein MinE topological specificity domain"/>
    <property type="match status" value="1"/>
</dbReference>
<feature type="chain" id="PRO_1000191271" description="Cell division topological specificity factor">
    <location>
        <begin position="1"/>
        <end position="91"/>
    </location>
</feature>
<name>MINE_CHLAD</name>
<accession>B8GB21</accession>
<reference key="1">
    <citation type="submission" date="2008-12" db="EMBL/GenBank/DDBJ databases">
        <title>Complete sequence of Chloroflexus aggregans DSM 9485.</title>
        <authorList>
            <consortium name="US DOE Joint Genome Institute"/>
            <person name="Lucas S."/>
            <person name="Copeland A."/>
            <person name="Lapidus A."/>
            <person name="Glavina del Rio T."/>
            <person name="Dalin E."/>
            <person name="Tice H."/>
            <person name="Pitluck S."/>
            <person name="Foster B."/>
            <person name="Larimer F."/>
            <person name="Land M."/>
            <person name="Hauser L."/>
            <person name="Kyrpides N."/>
            <person name="Mikhailova N."/>
            <person name="Bryant D.A."/>
            <person name="Richardson P."/>
        </authorList>
    </citation>
    <scope>NUCLEOTIDE SEQUENCE [LARGE SCALE GENOMIC DNA]</scope>
    <source>
        <strain>MD-66 / DSM 9485</strain>
    </source>
</reference>
<protein>
    <recommendedName>
        <fullName evidence="1">Cell division topological specificity factor</fullName>
    </recommendedName>
</protein>
<keyword id="KW-0131">Cell cycle</keyword>
<keyword id="KW-0132">Cell division</keyword>
<evidence type="ECO:0000255" key="1">
    <source>
        <dbReference type="HAMAP-Rule" id="MF_00262"/>
    </source>
</evidence>
<proteinExistence type="inferred from homology"/>
<comment type="function">
    <text evidence="1">Prevents the cell division inhibition by proteins MinC and MinD at internal division sites while permitting inhibition at polar sites. This ensures cell division at the proper site by restricting the formation of a division septum at the midpoint of the long axis of the cell.</text>
</comment>
<comment type="similarity">
    <text evidence="1">Belongs to the MinE family.</text>
</comment>
<sequence length="91" mass="10301">MSFLNGLFGRKRDSSAELAKQRLLTVLIDDRYKLTPEMMAQMKADLAEVLKRYLPAIDAEQIEVTLSRGEAHDLLKADVPLRRTSEGPSNR</sequence>